<proteinExistence type="inferred from homology"/>
<sequence length="1047" mass="116728">MACSAEAVFAELHALSNFSFLRGASHPKELVAEAARLGYAALALTDECSLAGVVRAHAEAKTLGFKLIIGSEFRLEDGPKLVLLAMDRRGYGQLAAFITLGRRAAEKGEYRLLRGQLETHPLDQCIAIWLPEDAPDDETGAWLARLFPARCWIGVELFLSGGDGLRLSVLQALGERLGLPLVACNDVHMHARERQPLQDTLTAIRLGRPLAELGYALFPNGERHLRPIEFLARIYPRALLEESLRIAERCRFSLDELRYEYPAELVPDGYTAIAWLRELTRQGMAERWPEGAPDKVRRQVEHELELIGAMAYEPFFLTVHDVVRFARSRGILCQGRGSAANSAVCYCLGITEVDPARLDLLFERFISRERNEPPDIDVDFEHERREEVIQYIYRKYGRHRAALAASLITYRVRSAVRDVARALGFSPSRIDTLARVLDRHGVAETLPERLAEAGLASENPAVRRLLALMQMLVGFPRHLSQHVGGFVIAAEDLSHWVPVENAAMPERTVIQWDKDDLESLGLLKVDVLSLGMLTAIRKALAYVGEGRGRPFTLADVPPEDPAVYEMLQRADSIGVFQVESRAQMSMLPRLRPQSYYDLVIQIAIVRPGPIQGDMVHPYLTRRAGLEPVSYPSPAVEKVLKRTLGVPIFQEQVMQLAMVAAGFTPGEADRLRRAMAAWHRKGGLEPFEKKLMDGMRERGYEERFARQIYRQIRGFGEYGFPESHSASFALLAYVSAWLKCHHPAAFACALLNSQPMGFYGPSQLIQDARRHGVEVRPIDVNHSDWDCTLEPTEIPNPLSLWERVGVRALQTGSNPALRLGLRLVNGFSSAAAQRLSDARRQGPFQSIQDLATRVPLDRRELEALAAADALHGLGGHRHRAFWEAAGVEAPTPLYAEPQFAEAEPLLRKPGEAEDVIADYAAAGASLRRHPLSLLRERLDRRGFRTAEALWQVRNGAIARVAGLVVCRQRPMTANGTTFVTIEDETGQINLIVWPATAQAQRRALLRAHLLAVSGTVQQEEGVLHLVAGRLEDIGKWLDGLVVKSRDFQ</sequence>
<reference key="1">
    <citation type="journal article" date="2004" name="PLoS Biol.">
        <title>Genomic insights into methanotrophy: the complete genome sequence of Methylococcus capsulatus (Bath).</title>
        <authorList>
            <person name="Ward N.L."/>
            <person name="Larsen O."/>
            <person name="Sakwa J."/>
            <person name="Bruseth L."/>
            <person name="Khouri H.M."/>
            <person name="Durkin A.S."/>
            <person name="Dimitrov G."/>
            <person name="Jiang L."/>
            <person name="Scanlan D."/>
            <person name="Kang K.H."/>
            <person name="Lewis M.R."/>
            <person name="Nelson K.E."/>
            <person name="Methe B.A."/>
            <person name="Wu M."/>
            <person name="Heidelberg J.F."/>
            <person name="Paulsen I.T."/>
            <person name="Fouts D.E."/>
            <person name="Ravel J."/>
            <person name="Tettelin H."/>
            <person name="Ren Q."/>
            <person name="Read T.D."/>
            <person name="DeBoy R.T."/>
            <person name="Seshadri R."/>
            <person name="Salzberg S.L."/>
            <person name="Jensen H.B."/>
            <person name="Birkeland N.K."/>
            <person name="Nelson W.C."/>
            <person name="Dodson R.J."/>
            <person name="Grindhaug S.H."/>
            <person name="Holt I.E."/>
            <person name="Eidhammer I."/>
            <person name="Jonasen I."/>
            <person name="Vanaken S."/>
            <person name="Utterback T.R."/>
            <person name="Feldblyum T.V."/>
            <person name="Fraser C.M."/>
            <person name="Lillehaug J.R."/>
            <person name="Eisen J.A."/>
        </authorList>
    </citation>
    <scope>NUCLEOTIDE SEQUENCE [LARGE SCALE GENOMIC DNA]</scope>
    <source>
        <strain>ATCC 33009 / NCIMB 11132 / Bath</strain>
    </source>
</reference>
<name>DNAE2_METCA</name>
<accession>Q605W1</accession>
<feature type="chain" id="PRO_0000103382" description="Error-prone DNA polymerase">
    <location>
        <begin position="1"/>
        <end position="1047"/>
    </location>
</feature>
<protein>
    <recommendedName>
        <fullName evidence="1">Error-prone DNA polymerase</fullName>
        <ecNumber evidence="1">2.7.7.7</ecNumber>
    </recommendedName>
</protein>
<dbReference type="EC" id="2.7.7.7" evidence="1"/>
<dbReference type="EMBL" id="AE017282">
    <property type="protein sequence ID" value="AAU91620.1"/>
    <property type="molecule type" value="Genomic_DNA"/>
</dbReference>
<dbReference type="RefSeq" id="WP_010961400.1">
    <property type="nucleotide sequence ID" value="NC_002977.6"/>
</dbReference>
<dbReference type="SMR" id="Q605W1"/>
<dbReference type="STRING" id="243233.MCA2164"/>
<dbReference type="GeneID" id="88224382"/>
<dbReference type="KEGG" id="mca:MCA2164"/>
<dbReference type="eggNOG" id="COG0587">
    <property type="taxonomic scope" value="Bacteria"/>
</dbReference>
<dbReference type="HOGENOM" id="CLU_001600_4_0_6"/>
<dbReference type="Proteomes" id="UP000006821">
    <property type="component" value="Chromosome"/>
</dbReference>
<dbReference type="GO" id="GO:0005737">
    <property type="term" value="C:cytoplasm"/>
    <property type="evidence" value="ECO:0007669"/>
    <property type="project" value="UniProtKB-SubCell"/>
</dbReference>
<dbReference type="GO" id="GO:0008408">
    <property type="term" value="F:3'-5' exonuclease activity"/>
    <property type="evidence" value="ECO:0007669"/>
    <property type="project" value="InterPro"/>
</dbReference>
<dbReference type="GO" id="GO:0003887">
    <property type="term" value="F:DNA-directed DNA polymerase activity"/>
    <property type="evidence" value="ECO:0007669"/>
    <property type="project" value="UniProtKB-UniRule"/>
</dbReference>
<dbReference type="GO" id="GO:0003676">
    <property type="term" value="F:nucleic acid binding"/>
    <property type="evidence" value="ECO:0007669"/>
    <property type="project" value="InterPro"/>
</dbReference>
<dbReference type="GO" id="GO:0006281">
    <property type="term" value="P:DNA repair"/>
    <property type="evidence" value="ECO:0007669"/>
    <property type="project" value="UniProtKB-UniRule"/>
</dbReference>
<dbReference type="GO" id="GO:0006260">
    <property type="term" value="P:DNA replication"/>
    <property type="evidence" value="ECO:0007669"/>
    <property type="project" value="UniProtKB-KW"/>
</dbReference>
<dbReference type="CDD" id="cd04485">
    <property type="entry name" value="DnaE_OBF"/>
    <property type="match status" value="1"/>
</dbReference>
<dbReference type="CDD" id="cd07434">
    <property type="entry name" value="PHP_PolIIIA_DnaE2"/>
    <property type="match status" value="1"/>
</dbReference>
<dbReference type="FunFam" id="1.10.150.870:FF:000002">
    <property type="entry name" value="Error-prone DNA polymerase"/>
    <property type="match status" value="1"/>
</dbReference>
<dbReference type="Gene3D" id="1.10.150.870">
    <property type="match status" value="1"/>
</dbReference>
<dbReference type="Gene3D" id="1.10.10.1600">
    <property type="entry name" value="Bacterial DNA polymerase III alpha subunit, thumb domain"/>
    <property type="match status" value="1"/>
</dbReference>
<dbReference type="Gene3D" id="3.20.20.140">
    <property type="entry name" value="Metal-dependent hydrolases"/>
    <property type="match status" value="1"/>
</dbReference>
<dbReference type="HAMAP" id="MF_01902">
    <property type="entry name" value="DNApol_error_prone"/>
    <property type="match status" value="1"/>
</dbReference>
<dbReference type="InterPro" id="IPR011708">
    <property type="entry name" value="DNA_pol3_alpha_NTPase_dom"/>
</dbReference>
<dbReference type="InterPro" id="IPR041931">
    <property type="entry name" value="DNA_pol3_alpha_thumb_dom"/>
</dbReference>
<dbReference type="InterPro" id="IPR040982">
    <property type="entry name" value="DNA_pol3_finger"/>
</dbReference>
<dbReference type="InterPro" id="IPR023073">
    <property type="entry name" value="DnaE2"/>
</dbReference>
<dbReference type="InterPro" id="IPR004805">
    <property type="entry name" value="DnaE2/DnaE/PolC"/>
</dbReference>
<dbReference type="InterPro" id="IPR029460">
    <property type="entry name" value="DNAPol_HHH"/>
</dbReference>
<dbReference type="InterPro" id="IPR004365">
    <property type="entry name" value="NA-bd_OB_tRNA"/>
</dbReference>
<dbReference type="InterPro" id="IPR004013">
    <property type="entry name" value="PHP_dom"/>
</dbReference>
<dbReference type="InterPro" id="IPR003141">
    <property type="entry name" value="Pol/His_phosphatase_N"/>
</dbReference>
<dbReference type="InterPro" id="IPR016195">
    <property type="entry name" value="Pol/histidinol_Pase-like"/>
</dbReference>
<dbReference type="NCBIfam" id="TIGR00594">
    <property type="entry name" value="polc"/>
    <property type="match status" value="1"/>
</dbReference>
<dbReference type="NCBIfam" id="NF004225">
    <property type="entry name" value="PRK05672.1"/>
    <property type="match status" value="1"/>
</dbReference>
<dbReference type="PANTHER" id="PTHR32294">
    <property type="entry name" value="DNA POLYMERASE III SUBUNIT ALPHA"/>
    <property type="match status" value="1"/>
</dbReference>
<dbReference type="PANTHER" id="PTHR32294:SF4">
    <property type="entry name" value="ERROR-PRONE DNA POLYMERASE"/>
    <property type="match status" value="1"/>
</dbReference>
<dbReference type="Pfam" id="PF07733">
    <property type="entry name" value="DNA_pol3_alpha"/>
    <property type="match status" value="1"/>
</dbReference>
<dbReference type="Pfam" id="PF17657">
    <property type="entry name" value="DNA_pol3_finger"/>
    <property type="match status" value="1"/>
</dbReference>
<dbReference type="Pfam" id="PF14579">
    <property type="entry name" value="HHH_6"/>
    <property type="match status" value="1"/>
</dbReference>
<dbReference type="Pfam" id="PF02811">
    <property type="entry name" value="PHP"/>
    <property type="match status" value="1"/>
</dbReference>
<dbReference type="Pfam" id="PF01336">
    <property type="entry name" value="tRNA_anti-codon"/>
    <property type="match status" value="1"/>
</dbReference>
<dbReference type="SMART" id="SM00481">
    <property type="entry name" value="POLIIIAc"/>
    <property type="match status" value="1"/>
</dbReference>
<dbReference type="SUPFAM" id="SSF89550">
    <property type="entry name" value="PHP domain-like"/>
    <property type="match status" value="1"/>
</dbReference>
<comment type="function">
    <text evidence="1">DNA polymerase involved in damage-induced mutagenesis and translesion synthesis (TLS). It is not the major replicative DNA polymerase.</text>
</comment>
<comment type="catalytic activity">
    <reaction evidence="1">
        <text>DNA(n) + a 2'-deoxyribonucleoside 5'-triphosphate = DNA(n+1) + diphosphate</text>
        <dbReference type="Rhea" id="RHEA:22508"/>
        <dbReference type="Rhea" id="RHEA-COMP:17339"/>
        <dbReference type="Rhea" id="RHEA-COMP:17340"/>
        <dbReference type="ChEBI" id="CHEBI:33019"/>
        <dbReference type="ChEBI" id="CHEBI:61560"/>
        <dbReference type="ChEBI" id="CHEBI:173112"/>
        <dbReference type="EC" id="2.7.7.7"/>
    </reaction>
</comment>
<comment type="subcellular location">
    <subcellularLocation>
        <location evidence="1">Cytoplasm</location>
    </subcellularLocation>
</comment>
<comment type="similarity">
    <text evidence="1">Belongs to the DNA polymerase type-C family. DnaE2 subfamily.</text>
</comment>
<gene>
    <name evidence="1" type="primary">dnaE2</name>
    <name type="ordered locus">MCA2164</name>
</gene>
<organism>
    <name type="scientific">Methylococcus capsulatus (strain ATCC 33009 / NCIMB 11132 / Bath)</name>
    <dbReference type="NCBI Taxonomy" id="243233"/>
    <lineage>
        <taxon>Bacteria</taxon>
        <taxon>Pseudomonadati</taxon>
        <taxon>Pseudomonadota</taxon>
        <taxon>Gammaproteobacteria</taxon>
        <taxon>Methylococcales</taxon>
        <taxon>Methylococcaceae</taxon>
        <taxon>Methylococcus</taxon>
    </lineage>
</organism>
<evidence type="ECO:0000255" key="1">
    <source>
        <dbReference type="HAMAP-Rule" id="MF_01902"/>
    </source>
</evidence>
<keyword id="KW-0963">Cytoplasm</keyword>
<keyword id="KW-0227">DNA damage</keyword>
<keyword id="KW-0234">DNA repair</keyword>
<keyword id="KW-0235">DNA replication</keyword>
<keyword id="KW-0239">DNA-directed DNA polymerase</keyword>
<keyword id="KW-0548">Nucleotidyltransferase</keyword>
<keyword id="KW-1185">Reference proteome</keyword>
<keyword id="KW-0808">Transferase</keyword>